<name>FABD_BUCBP</name>
<comment type="catalytic activity">
    <reaction>
        <text>holo-[ACP] + malonyl-CoA = malonyl-[ACP] + CoA</text>
        <dbReference type="Rhea" id="RHEA:41792"/>
        <dbReference type="Rhea" id="RHEA-COMP:9623"/>
        <dbReference type="Rhea" id="RHEA-COMP:9685"/>
        <dbReference type="ChEBI" id="CHEBI:57287"/>
        <dbReference type="ChEBI" id="CHEBI:57384"/>
        <dbReference type="ChEBI" id="CHEBI:64479"/>
        <dbReference type="ChEBI" id="CHEBI:78449"/>
        <dbReference type="EC" id="2.3.1.39"/>
    </reaction>
</comment>
<comment type="pathway">
    <text>Lipid metabolism; fatty acid biosynthesis.</text>
</comment>
<comment type="similarity">
    <text evidence="2">Belongs to the FabD family.</text>
</comment>
<evidence type="ECO:0000250" key="1"/>
<evidence type="ECO:0000305" key="2"/>
<keyword id="KW-0012">Acyltransferase</keyword>
<keyword id="KW-0275">Fatty acid biosynthesis</keyword>
<keyword id="KW-0276">Fatty acid metabolism</keyword>
<keyword id="KW-0444">Lipid biosynthesis</keyword>
<keyword id="KW-0443">Lipid metabolism</keyword>
<keyword id="KW-1185">Reference proteome</keyword>
<keyword id="KW-0808">Transferase</keyword>
<sequence length="311" mass="35797">MFKYTLLFPGQNDINRKKILSPFFSKNKIVQSIFRESSEYIGYDIWKLIQDDPKKKLKNNKYSQLVTLVSSIAIYELWKNKQCTHPNLVIGHSLGEYTALVCSQSLKLSDAIQLIITRYKFMMEAMSKKIGLMTAIIGLNERTIRKLLKKYDYSHEVSIACINTDNQIVLSGERNSVKHINLHCKKAGAKNIINLYIHPPSHCTLMKKASKKLLYVLKHTTFKIPIYPVISSTSLKFQNSEQAIRISLAKQIYSTVRWNSIIKYIKKDIFIFLEVSTKSILTNLNKNIIKKSLSISLNCQANFLKALKIIL</sequence>
<reference key="1">
    <citation type="journal article" date="2003" name="Proc. Natl. Acad. Sci. U.S.A.">
        <title>Reductive genome evolution in Buchnera aphidicola.</title>
        <authorList>
            <person name="van Ham R.C.H.J."/>
            <person name="Kamerbeek J."/>
            <person name="Palacios C."/>
            <person name="Rausell C."/>
            <person name="Abascal F."/>
            <person name="Bastolla U."/>
            <person name="Fernandez J.M."/>
            <person name="Jimenez L."/>
            <person name="Postigo M."/>
            <person name="Silva F.J."/>
            <person name="Tamames J."/>
            <person name="Viguera E."/>
            <person name="Latorre A."/>
            <person name="Valencia A."/>
            <person name="Moran F."/>
            <person name="Moya A."/>
        </authorList>
    </citation>
    <scope>NUCLEOTIDE SEQUENCE [LARGE SCALE GENOMIC DNA]</scope>
    <source>
        <strain>Bp</strain>
    </source>
</reference>
<dbReference type="EC" id="2.3.1.39"/>
<dbReference type="EMBL" id="AE016826">
    <property type="protein sequence ID" value="AAO27042.1"/>
    <property type="molecule type" value="Genomic_DNA"/>
</dbReference>
<dbReference type="RefSeq" id="WP_011091443.1">
    <property type="nucleotide sequence ID" value="NC_004545.1"/>
</dbReference>
<dbReference type="SMR" id="Q89AH0"/>
<dbReference type="STRING" id="224915.bbp_320"/>
<dbReference type="KEGG" id="bab:bbp_320"/>
<dbReference type="eggNOG" id="COG0331">
    <property type="taxonomic scope" value="Bacteria"/>
</dbReference>
<dbReference type="HOGENOM" id="CLU_030558_0_0_6"/>
<dbReference type="OrthoDB" id="9808564at2"/>
<dbReference type="UniPathway" id="UPA00094"/>
<dbReference type="Proteomes" id="UP000000601">
    <property type="component" value="Chromosome"/>
</dbReference>
<dbReference type="GO" id="GO:0005829">
    <property type="term" value="C:cytosol"/>
    <property type="evidence" value="ECO:0007669"/>
    <property type="project" value="TreeGrafter"/>
</dbReference>
<dbReference type="GO" id="GO:0004314">
    <property type="term" value="F:[acyl-carrier-protein] S-malonyltransferase activity"/>
    <property type="evidence" value="ECO:0007669"/>
    <property type="project" value="UniProtKB-EC"/>
</dbReference>
<dbReference type="GO" id="GO:0006633">
    <property type="term" value="P:fatty acid biosynthetic process"/>
    <property type="evidence" value="ECO:0007669"/>
    <property type="project" value="UniProtKB-UniPathway"/>
</dbReference>
<dbReference type="Gene3D" id="3.30.70.250">
    <property type="entry name" value="Malonyl-CoA ACP transacylase, ACP-binding"/>
    <property type="match status" value="1"/>
</dbReference>
<dbReference type="Gene3D" id="3.40.366.10">
    <property type="entry name" value="Malonyl-Coenzyme A Acyl Carrier Protein, domain 2"/>
    <property type="match status" value="1"/>
</dbReference>
<dbReference type="InterPro" id="IPR001227">
    <property type="entry name" value="Ac_transferase_dom_sf"/>
</dbReference>
<dbReference type="InterPro" id="IPR014043">
    <property type="entry name" value="Acyl_transferase_dom"/>
</dbReference>
<dbReference type="InterPro" id="IPR016035">
    <property type="entry name" value="Acyl_Trfase/lysoPLipase"/>
</dbReference>
<dbReference type="InterPro" id="IPR050858">
    <property type="entry name" value="Mal-CoA-ACP_Trans/PKS_FabD"/>
</dbReference>
<dbReference type="InterPro" id="IPR024925">
    <property type="entry name" value="Malonyl_CoA-ACP_transAc"/>
</dbReference>
<dbReference type="InterPro" id="IPR016036">
    <property type="entry name" value="Malonyl_transacylase_ACP-bd"/>
</dbReference>
<dbReference type="PANTHER" id="PTHR42681">
    <property type="entry name" value="MALONYL-COA-ACYL CARRIER PROTEIN TRANSACYLASE, MITOCHONDRIAL"/>
    <property type="match status" value="1"/>
</dbReference>
<dbReference type="PANTHER" id="PTHR42681:SF1">
    <property type="entry name" value="MALONYL-COA-ACYL CARRIER PROTEIN TRANSACYLASE, MITOCHONDRIAL"/>
    <property type="match status" value="1"/>
</dbReference>
<dbReference type="Pfam" id="PF00698">
    <property type="entry name" value="Acyl_transf_1"/>
    <property type="match status" value="1"/>
</dbReference>
<dbReference type="PIRSF" id="PIRSF000446">
    <property type="entry name" value="Mct"/>
    <property type="match status" value="1"/>
</dbReference>
<dbReference type="SMART" id="SM00827">
    <property type="entry name" value="PKS_AT"/>
    <property type="match status" value="1"/>
</dbReference>
<dbReference type="SUPFAM" id="SSF52151">
    <property type="entry name" value="FabD/lysophospholipase-like"/>
    <property type="match status" value="1"/>
</dbReference>
<dbReference type="SUPFAM" id="SSF55048">
    <property type="entry name" value="Probable ACP-binding domain of malonyl-CoA ACP transacylase"/>
    <property type="match status" value="1"/>
</dbReference>
<organism>
    <name type="scientific">Buchnera aphidicola subsp. Baizongia pistaciae (strain Bp)</name>
    <dbReference type="NCBI Taxonomy" id="224915"/>
    <lineage>
        <taxon>Bacteria</taxon>
        <taxon>Pseudomonadati</taxon>
        <taxon>Pseudomonadota</taxon>
        <taxon>Gammaproteobacteria</taxon>
        <taxon>Enterobacterales</taxon>
        <taxon>Erwiniaceae</taxon>
        <taxon>Buchnera</taxon>
    </lineage>
</organism>
<feature type="chain" id="PRO_0000194211" description="Malonyl CoA-acyl carrier protein transacylase">
    <location>
        <begin position="1"/>
        <end position="311"/>
    </location>
</feature>
<feature type="active site" evidence="1">
    <location>
        <position position="93"/>
    </location>
</feature>
<feature type="active site" evidence="1">
    <location>
        <position position="202"/>
    </location>
</feature>
<accession>Q89AH0</accession>
<proteinExistence type="inferred from homology"/>
<protein>
    <recommendedName>
        <fullName>Malonyl CoA-acyl carrier protein transacylase</fullName>
        <shortName>MCT</shortName>
        <ecNumber>2.3.1.39</ecNumber>
    </recommendedName>
</protein>
<gene>
    <name type="primary">fabD</name>
    <name type="ordered locus">bbp_320</name>
</gene>